<accession>Q32LI2</accession>
<dbReference type="EMBL" id="BC109563">
    <property type="protein sequence ID" value="AAI09564.1"/>
    <property type="molecule type" value="mRNA"/>
</dbReference>
<dbReference type="RefSeq" id="NP_001035599.1">
    <property type="nucleotide sequence ID" value="NM_001040509.2"/>
</dbReference>
<dbReference type="SMR" id="Q32LI2"/>
<dbReference type="FunCoup" id="Q32LI2">
    <property type="interactions" value="7"/>
</dbReference>
<dbReference type="STRING" id="9913.ENSBTAP00000004732"/>
<dbReference type="MEROPS" id="S01.085"/>
<dbReference type="GlyCosmos" id="Q32LI2">
    <property type="glycosylation" value="1 site, No reported glycans"/>
</dbReference>
<dbReference type="GlyGen" id="Q32LI2">
    <property type="glycosylation" value="1 site"/>
</dbReference>
<dbReference type="PaxDb" id="9913-ENSBTAP00000004732"/>
<dbReference type="GeneID" id="506919"/>
<dbReference type="KEGG" id="bta:506919"/>
<dbReference type="CTD" id="136541"/>
<dbReference type="VEuPathDB" id="HostDB:ENSBTAG00000003628"/>
<dbReference type="eggNOG" id="KOG3627">
    <property type="taxonomic scope" value="Eukaryota"/>
</dbReference>
<dbReference type="HOGENOM" id="CLU_006842_1_6_1"/>
<dbReference type="InParanoid" id="Q32LI2"/>
<dbReference type="OMA" id="IEYDLML"/>
<dbReference type="OrthoDB" id="10059102at2759"/>
<dbReference type="TreeFam" id="TF331065"/>
<dbReference type="Proteomes" id="UP000009136">
    <property type="component" value="Chromosome 4"/>
</dbReference>
<dbReference type="Bgee" id="ENSBTAG00000003628">
    <property type="expression patterns" value="Expressed in semen and 8 other cell types or tissues"/>
</dbReference>
<dbReference type="GO" id="GO:0005615">
    <property type="term" value="C:extracellular space"/>
    <property type="evidence" value="ECO:0000318"/>
    <property type="project" value="GO_Central"/>
</dbReference>
<dbReference type="GO" id="GO:0030141">
    <property type="term" value="C:secretory granule"/>
    <property type="evidence" value="ECO:0000318"/>
    <property type="project" value="GO_Central"/>
</dbReference>
<dbReference type="GO" id="GO:0004252">
    <property type="term" value="F:serine-type endopeptidase activity"/>
    <property type="evidence" value="ECO:0000318"/>
    <property type="project" value="GO_Central"/>
</dbReference>
<dbReference type="GO" id="GO:0051604">
    <property type="term" value="P:protein maturation"/>
    <property type="evidence" value="ECO:0000318"/>
    <property type="project" value="GO_Central"/>
</dbReference>
<dbReference type="GO" id="GO:0006508">
    <property type="term" value="P:proteolysis"/>
    <property type="evidence" value="ECO:0007669"/>
    <property type="project" value="InterPro"/>
</dbReference>
<dbReference type="CDD" id="cd00190">
    <property type="entry name" value="Tryp_SPc"/>
    <property type="match status" value="1"/>
</dbReference>
<dbReference type="FunFam" id="2.40.10.10:FF:000049">
    <property type="entry name" value="probable inactive serine protease 37"/>
    <property type="match status" value="1"/>
</dbReference>
<dbReference type="FunFam" id="2.40.10.10:FF:000005">
    <property type="entry name" value="Serine protease 37"/>
    <property type="match status" value="1"/>
</dbReference>
<dbReference type="Gene3D" id="2.40.10.10">
    <property type="entry name" value="Trypsin-like serine proteases"/>
    <property type="match status" value="2"/>
</dbReference>
<dbReference type="InterPro" id="IPR009003">
    <property type="entry name" value="Peptidase_S1_PA"/>
</dbReference>
<dbReference type="InterPro" id="IPR043504">
    <property type="entry name" value="Peptidase_S1_PA_chymotrypsin"/>
</dbReference>
<dbReference type="InterPro" id="IPR001254">
    <property type="entry name" value="Trypsin_dom"/>
</dbReference>
<dbReference type="PANTHER" id="PTHR24271">
    <property type="entry name" value="KALLIKREIN-RELATED"/>
    <property type="match status" value="1"/>
</dbReference>
<dbReference type="PANTHER" id="PTHR24271:SF56">
    <property type="entry name" value="SERINE PROTEASE 58"/>
    <property type="match status" value="1"/>
</dbReference>
<dbReference type="Pfam" id="PF00089">
    <property type="entry name" value="Trypsin"/>
    <property type="match status" value="1"/>
</dbReference>
<dbReference type="SMART" id="SM00020">
    <property type="entry name" value="Tryp_SPc"/>
    <property type="match status" value="1"/>
</dbReference>
<dbReference type="SUPFAM" id="SSF50494">
    <property type="entry name" value="Trypsin-like serine proteases"/>
    <property type="match status" value="1"/>
</dbReference>
<dbReference type="PROSITE" id="PS50240">
    <property type="entry name" value="TRYPSIN_DOM"/>
    <property type="match status" value="1"/>
</dbReference>
<feature type="signal peptide" evidence="1">
    <location>
        <begin position="1"/>
        <end position="17"/>
    </location>
</feature>
<feature type="chain" id="PRO_0000317762" description="Probable inactive serine protease 58">
    <location>
        <begin position="18"/>
        <end position="242"/>
    </location>
</feature>
<feature type="domain" description="Peptidase S1" evidence="2">
    <location>
        <begin position="18"/>
        <end position="240"/>
    </location>
</feature>
<feature type="glycosylation site" description="N-linked (GlcNAc...) asparagine" evidence="1">
    <location>
        <position position="157"/>
    </location>
</feature>
<feature type="disulfide bond" evidence="2">
    <location>
        <begin position="41"/>
        <end position="57"/>
    </location>
</feature>
<feature type="disulfide bond" evidence="2">
    <location>
        <begin position="134"/>
        <end position="202"/>
    </location>
</feature>
<feature type="disulfide bond" evidence="2">
    <location>
        <begin position="166"/>
        <end position="181"/>
    </location>
</feature>
<feature type="disulfide bond" evidence="2">
    <location>
        <begin position="192"/>
        <end position="216"/>
    </location>
</feature>
<sequence length="242" mass="27412">MNLILLWALLNLPVALTFDPNYKDDITPPYLIYLKSDYLPCVGVLIHPLWVITAANCNLPRLQLILGVTKPSNIDEEKYVQVVGYEKMIHHPQFSITSIEHNLMLIKLQTHIELNNYVKIVSLPKEPAAEDDTCIVSTWAYNLCDHYKDPDSLQNVNISVISKVECLKAYKYMHIRDSMMCVGIVPGRRQPCKEVTAAPAVCNGILQGILTFADGCVLRADVGIYTRIINYIPWIENTIQNN</sequence>
<reference key="1">
    <citation type="submission" date="2005-11" db="EMBL/GenBank/DDBJ databases">
        <authorList>
            <consortium name="NIH - Mammalian Gene Collection (MGC) project"/>
        </authorList>
    </citation>
    <scope>NUCLEOTIDE SEQUENCE [LARGE SCALE MRNA]</scope>
    <source>
        <strain>Crossbred X Angus</strain>
        <tissue>Liver</tissue>
    </source>
</reference>
<keyword id="KW-1015">Disulfide bond</keyword>
<keyword id="KW-0325">Glycoprotein</keyword>
<keyword id="KW-1185">Reference proteome</keyword>
<keyword id="KW-0964">Secreted</keyword>
<keyword id="KW-0721">Serine protease homolog</keyword>
<keyword id="KW-0732">Signal</keyword>
<organism>
    <name type="scientific">Bos taurus</name>
    <name type="common">Bovine</name>
    <dbReference type="NCBI Taxonomy" id="9913"/>
    <lineage>
        <taxon>Eukaryota</taxon>
        <taxon>Metazoa</taxon>
        <taxon>Chordata</taxon>
        <taxon>Craniata</taxon>
        <taxon>Vertebrata</taxon>
        <taxon>Euteleostomi</taxon>
        <taxon>Mammalia</taxon>
        <taxon>Eutheria</taxon>
        <taxon>Laurasiatheria</taxon>
        <taxon>Artiodactyla</taxon>
        <taxon>Ruminantia</taxon>
        <taxon>Pecora</taxon>
        <taxon>Bovidae</taxon>
        <taxon>Bovinae</taxon>
        <taxon>Bos</taxon>
    </lineage>
</organism>
<evidence type="ECO:0000255" key="1"/>
<evidence type="ECO:0000255" key="2">
    <source>
        <dbReference type="PROSITE-ProRule" id="PRU00274"/>
    </source>
</evidence>
<evidence type="ECO:0000305" key="3"/>
<gene>
    <name type="primary">PRSS58</name>
    <name type="synonym">TRYX3</name>
</gene>
<name>PRS58_BOVIN</name>
<protein>
    <recommendedName>
        <fullName>Probable inactive serine protease 58</fullName>
    </recommendedName>
    <alternativeName>
        <fullName>Trypsin-X3</fullName>
    </alternativeName>
</protein>
<proteinExistence type="evidence at transcript level"/>
<comment type="subcellular location">
    <subcellularLocation>
        <location evidence="3">Secreted</location>
    </subcellularLocation>
</comment>
<comment type="similarity">
    <text evidence="2">Belongs to the peptidase S1 family.</text>
</comment>
<comment type="caution">
    <text evidence="3">Asn-56 is present instead of the conserved His which is expected to be an active site residue. Asn-102 is present instead of the conserved Asp which is expected to be an active site residue. Thr-196 is present instead of the conserved Ser which is expected to be an active site residue. It is therefore expected that this protein has lost its catalytic activity.</text>
</comment>